<organism>
    <name type="scientific">Bacillus cereus (strain Q1)</name>
    <dbReference type="NCBI Taxonomy" id="361100"/>
    <lineage>
        <taxon>Bacteria</taxon>
        <taxon>Bacillati</taxon>
        <taxon>Bacillota</taxon>
        <taxon>Bacilli</taxon>
        <taxon>Bacillales</taxon>
        <taxon>Bacillaceae</taxon>
        <taxon>Bacillus</taxon>
        <taxon>Bacillus cereus group</taxon>
    </lineage>
</organism>
<protein>
    <recommendedName>
        <fullName evidence="1">Chromosomal replication initiator protein DnaA</fullName>
    </recommendedName>
</protein>
<reference key="1">
    <citation type="journal article" date="2009" name="J. Bacteriol.">
        <title>Complete genome sequence of the extremophilic Bacillus cereus strain Q1 with industrial applications.</title>
        <authorList>
            <person name="Xiong Z."/>
            <person name="Jiang Y."/>
            <person name="Qi D."/>
            <person name="Lu H."/>
            <person name="Yang F."/>
            <person name="Yang J."/>
            <person name="Chen L."/>
            <person name="Sun L."/>
            <person name="Xu X."/>
            <person name="Xue Y."/>
            <person name="Zhu Y."/>
            <person name="Jin Q."/>
        </authorList>
    </citation>
    <scope>NUCLEOTIDE SEQUENCE [LARGE SCALE GENOMIC DNA]</scope>
    <source>
        <strain>Q1</strain>
    </source>
</reference>
<comment type="function">
    <text evidence="1">Plays an essential role in the initiation and regulation of chromosomal replication. ATP-DnaA binds to the origin of replication (oriC) to initiate formation of the DNA replication initiation complex once per cell cycle. Binds the DnaA box (a 9 base pair repeat at the origin) and separates the double-stranded (ds)DNA. Forms a right-handed helical filament on oriC DNA; dsDNA binds to the exterior of the filament while single-stranded (ss)DNA is stabiized in the filament's interior. The ATP-DnaA-oriC complex binds and stabilizes one strand of the AT-rich DNA unwinding element (DUE), permitting loading of DNA polymerase. After initiation quickly degrades to an ADP-DnaA complex that is not apt for DNA replication. Binds acidic phospholipids.</text>
</comment>
<comment type="subunit">
    <text evidence="1">Oligomerizes as a right-handed, spiral filament on DNA at oriC.</text>
</comment>
<comment type="subcellular location">
    <subcellularLocation>
        <location evidence="1">Cytoplasm</location>
    </subcellularLocation>
</comment>
<comment type="domain">
    <text evidence="1">Domain I is involved in oligomerization and binding regulators, domain II is flexibile and of varying length in different bacteria, domain III forms the AAA+ region, while domain IV binds dsDNA.</text>
</comment>
<comment type="similarity">
    <text evidence="1">Belongs to the DnaA family.</text>
</comment>
<accession>B9IYG8</accession>
<evidence type="ECO:0000255" key="1">
    <source>
        <dbReference type="HAMAP-Rule" id="MF_00377"/>
    </source>
</evidence>
<evidence type="ECO:0000256" key="2">
    <source>
        <dbReference type="SAM" id="MobiDB-lite"/>
    </source>
</evidence>
<gene>
    <name evidence="1" type="primary">dnaA</name>
    <name type="ordered locus">BCQ_0001</name>
</gene>
<keyword id="KW-0067">ATP-binding</keyword>
<keyword id="KW-0963">Cytoplasm</keyword>
<keyword id="KW-0235">DNA replication</keyword>
<keyword id="KW-0238">DNA-binding</keyword>
<keyword id="KW-0446">Lipid-binding</keyword>
<keyword id="KW-0547">Nucleotide-binding</keyword>
<sequence length="446" mass="50527">MENISDLWNSALKELEKKVSKPSYETWLKSTTAHNLKKDVLTITAPNEFARDWLESHYSELISETLYDLTGAKLAIRFIIPQSQAEEEIDLPPSKPNSAQDDSNHLPQSMLNPKYTFDTFVIGSGNRFAHAASLAVAEAPAKAYNPLFIYGGVGLGKTHLMHAIGHYVIEHNPNAKVVYLSSEKFTNEFINSIRDNKAVDFRNKYRNVDVLLIDDIQFLAGKEQTQEEFFHTFNALHEESKQIVISSDRPPKEIPTLEDRLRSRFEWGLITDITPPDLETRIAILRKKAKAEGLDIPNEVMLYIANQIDSNIRELEGALIRVVAYSSLINKDINADLAAEALKDIIPNSKPKIISIYDIQKAVGDVYQVKLEDFKAKKRTKSVAFPRQIAMYLSRELTDSSLPKIGEEFGGRDHTTVIHAHEKISKLLKTDTQLQKQVEEINDILK</sequence>
<proteinExistence type="inferred from homology"/>
<name>DNAA_BACCQ</name>
<feature type="chain" id="PRO_1000189781" description="Chromosomal replication initiator protein DnaA">
    <location>
        <begin position="1"/>
        <end position="446"/>
    </location>
</feature>
<feature type="region of interest" description="Domain I, interacts with DnaA modulators" evidence="1">
    <location>
        <begin position="1"/>
        <end position="92"/>
    </location>
</feature>
<feature type="region of interest" description="Disordered" evidence="2">
    <location>
        <begin position="87"/>
        <end position="107"/>
    </location>
</feature>
<feature type="region of interest" description="Domain II" evidence="1">
    <location>
        <begin position="93"/>
        <end position="109"/>
    </location>
</feature>
<feature type="region of interest" description="Domain III, AAA+ region" evidence="1">
    <location>
        <begin position="110"/>
        <end position="326"/>
    </location>
</feature>
<feature type="region of interest" description="Domain IV, binds dsDNA" evidence="1">
    <location>
        <begin position="327"/>
        <end position="446"/>
    </location>
</feature>
<feature type="compositionally biased region" description="Polar residues" evidence="2">
    <location>
        <begin position="96"/>
        <end position="107"/>
    </location>
</feature>
<feature type="binding site" evidence="1">
    <location>
        <position position="154"/>
    </location>
    <ligand>
        <name>ATP</name>
        <dbReference type="ChEBI" id="CHEBI:30616"/>
    </ligand>
</feature>
<feature type="binding site" evidence="1">
    <location>
        <position position="156"/>
    </location>
    <ligand>
        <name>ATP</name>
        <dbReference type="ChEBI" id="CHEBI:30616"/>
    </ligand>
</feature>
<feature type="binding site" evidence="1">
    <location>
        <position position="157"/>
    </location>
    <ligand>
        <name>ATP</name>
        <dbReference type="ChEBI" id="CHEBI:30616"/>
    </ligand>
</feature>
<feature type="binding site" evidence="1">
    <location>
        <position position="158"/>
    </location>
    <ligand>
        <name>ATP</name>
        <dbReference type="ChEBI" id="CHEBI:30616"/>
    </ligand>
</feature>
<dbReference type="EMBL" id="CP000227">
    <property type="protein sequence ID" value="ACM10530.1"/>
    <property type="molecule type" value="Genomic_DNA"/>
</dbReference>
<dbReference type="SMR" id="B9IYG8"/>
<dbReference type="KEGG" id="bcq:BCQ_0001"/>
<dbReference type="HOGENOM" id="CLU_026910_3_1_9"/>
<dbReference type="Proteomes" id="UP000000441">
    <property type="component" value="Chromosome"/>
</dbReference>
<dbReference type="GO" id="GO:0005737">
    <property type="term" value="C:cytoplasm"/>
    <property type="evidence" value="ECO:0007669"/>
    <property type="project" value="UniProtKB-SubCell"/>
</dbReference>
<dbReference type="GO" id="GO:0005886">
    <property type="term" value="C:plasma membrane"/>
    <property type="evidence" value="ECO:0007669"/>
    <property type="project" value="TreeGrafter"/>
</dbReference>
<dbReference type="GO" id="GO:0005524">
    <property type="term" value="F:ATP binding"/>
    <property type="evidence" value="ECO:0007669"/>
    <property type="project" value="UniProtKB-UniRule"/>
</dbReference>
<dbReference type="GO" id="GO:0016887">
    <property type="term" value="F:ATP hydrolysis activity"/>
    <property type="evidence" value="ECO:0007669"/>
    <property type="project" value="InterPro"/>
</dbReference>
<dbReference type="GO" id="GO:0003688">
    <property type="term" value="F:DNA replication origin binding"/>
    <property type="evidence" value="ECO:0007669"/>
    <property type="project" value="UniProtKB-UniRule"/>
</dbReference>
<dbReference type="GO" id="GO:0008289">
    <property type="term" value="F:lipid binding"/>
    <property type="evidence" value="ECO:0007669"/>
    <property type="project" value="UniProtKB-KW"/>
</dbReference>
<dbReference type="GO" id="GO:0006270">
    <property type="term" value="P:DNA replication initiation"/>
    <property type="evidence" value="ECO:0007669"/>
    <property type="project" value="UniProtKB-UniRule"/>
</dbReference>
<dbReference type="GO" id="GO:0006275">
    <property type="term" value="P:regulation of DNA replication"/>
    <property type="evidence" value="ECO:0007669"/>
    <property type="project" value="UniProtKB-UniRule"/>
</dbReference>
<dbReference type="CDD" id="cd00009">
    <property type="entry name" value="AAA"/>
    <property type="match status" value="1"/>
</dbReference>
<dbReference type="CDD" id="cd06571">
    <property type="entry name" value="Bac_DnaA_C"/>
    <property type="match status" value="1"/>
</dbReference>
<dbReference type="FunFam" id="1.10.1750.10:FF:000003">
    <property type="entry name" value="Chromosomal replication initiator protein DnaA"/>
    <property type="match status" value="1"/>
</dbReference>
<dbReference type="FunFam" id="1.10.8.60:FF:000003">
    <property type="entry name" value="Chromosomal replication initiator protein DnaA"/>
    <property type="match status" value="1"/>
</dbReference>
<dbReference type="FunFam" id="3.30.300.180:FF:000002">
    <property type="entry name" value="Chromosomal replication initiator protein DnaA"/>
    <property type="match status" value="1"/>
</dbReference>
<dbReference type="FunFam" id="3.40.50.300:FF:000150">
    <property type="entry name" value="Chromosomal replication initiator protein DnaA"/>
    <property type="match status" value="1"/>
</dbReference>
<dbReference type="Gene3D" id="1.10.1750.10">
    <property type="match status" value="1"/>
</dbReference>
<dbReference type="Gene3D" id="1.10.8.60">
    <property type="match status" value="1"/>
</dbReference>
<dbReference type="Gene3D" id="3.30.300.180">
    <property type="match status" value="1"/>
</dbReference>
<dbReference type="Gene3D" id="3.40.50.300">
    <property type="entry name" value="P-loop containing nucleotide triphosphate hydrolases"/>
    <property type="match status" value="1"/>
</dbReference>
<dbReference type="HAMAP" id="MF_00377">
    <property type="entry name" value="DnaA_bact"/>
    <property type="match status" value="1"/>
</dbReference>
<dbReference type="InterPro" id="IPR003593">
    <property type="entry name" value="AAA+_ATPase"/>
</dbReference>
<dbReference type="InterPro" id="IPR001957">
    <property type="entry name" value="Chromosome_initiator_DnaA"/>
</dbReference>
<dbReference type="InterPro" id="IPR020591">
    <property type="entry name" value="Chromosome_initiator_DnaA-like"/>
</dbReference>
<dbReference type="InterPro" id="IPR018312">
    <property type="entry name" value="Chromosome_initiator_DnaA_CS"/>
</dbReference>
<dbReference type="InterPro" id="IPR013159">
    <property type="entry name" value="DnaA_C"/>
</dbReference>
<dbReference type="InterPro" id="IPR013317">
    <property type="entry name" value="DnaA_dom"/>
</dbReference>
<dbReference type="InterPro" id="IPR024633">
    <property type="entry name" value="DnaA_N_dom"/>
</dbReference>
<dbReference type="InterPro" id="IPR038454">
    <property type="entry name" value="DnaA_N_sf"/>
</dbReference>
<dbReference type="InterPro" id="IPR027417">
    <property type="entry name" value="P-loop_NTPase"/>
</dbReference>
<dbReference type="InterPro" id="IPR010921">
    <property type="entry name" value="Trp_repressor/repl_initiator"/>
</dbReference>
<dbReference type="NCBIfam" id="TIGR00362">
    <property type="entry name" value="DnaA"/>
    <property type="match status" value="1"/>
</dbReference>
<dbReference type="NCBIfam" id="NF010686">
    <property type="entry name" value="PRK14086.1"/>
    <property type="match status" value="1"/>
</dbReference>
<dbReference type="PANTHER" id="PTHR30050">
    <property type="entry name" value="CHROMOSOMAL REPLICATION INITIATOR PROTEIN DNAA"/>
    <property type="match status" value="1"/>
</dbReference>
<dbReference type="PANTHER" id="PTHR30050:SF2">
    <property type="entry name" value="CHROMOSOMAL REPLICATION INITIATOR PROTEIN DNAA"/>
    <property type="match status" value="1"/>
</dbReference>
<dbReference type="Pfam" id="PF00308">
    <property type="entry name" value="Bac_DnaA"/>
    <property type="match status" value="1"/>
</dbReference>
<dbReference type="Pfam" id="PF08299">
    <property type="entry name" value="Bac_DnaA_C"/>
    <property type="match status" value="1"/>
</dbReference>
<dbReference type="Pfam" id="PF11638">
    <property type="entry name" value="DnaA_N"/>
    <property type="match status" value="1"/>
</dbReference>
<dbReference type="PRINTS" id="PR00051">
    <property type="entry name" value="DNAA"/>
</dbReference>
<dbReference type="SMART" id="SM00382">
    <property type="entry name" value="AAA"/>
    <property type="match status" value="1"/>
</dbReference>
<dbReference type="SMART" id="SM00760">
    <property type="entry name" value="Bac_DnaA_C"/>
    <property type="match status" value="1"/>
</dbReference>
<dbReference type="SUPFAM" id="SSF52540">
    <property type="entry name" value="P-loop containing nucleoside triphosphate hydrolases"/>
    <property type="match status" value="1"/>
</dbReference>
<dbReference type="SUPFAM" id="SSF48295">
    <property type="entry name" value="TrpR-like"/>
    <property type="match status" value="1"/>
</dbReference>
<dbReference type="PROSITE" id="PS01008">
    <property type="entry name" value="DNAA"/>
    <property type="match status" value="1"/>
</dbReference>